<comment type="function">
    <text evidence="1">Catalyzes the stereospecific hydrolysis of the cyclic amide bond of D-hydantoin derivatives with an aromatic side chains at the 5'-position. Has no activity on dihydropyrimidines. The physiological function is unknown.</text>
</comment>
<comment type="catalytic activity">
    <reaction evidence="1">
        <text>D-5-phenylhydantoin + H2O = N-carbamoyl-D-phenylglycine + H(+)</text>
        <dbReference type="Rhea" id="RHEA:51664"/>
        <dbReference type="ChEBI" id="CHEBI:15377"/>
        <dbReference type="ChEBI" id="CHEBI:15378"/>
        <dbReference type="ChEBI" id="CHEBI:140750"/>
        <dbReference type="ChEBI" id="CHEBI:140758"/>
    </reaction>
</comment>
<comment type="cofactor">
    <cofactor evidence="1">
        <name>a divalent metal cation</name>
        <dbReference type="ChEBI" id="CHEBI:60240"/>
    </cofactor>
    <text evidence="1">Binds 2 divalent metal cations per subunit.</text>
</comment>
<comment type="subunit">
    <text evidence="1">Homotetramer.</text>
</comment>
<comment type="PTM">
    <text evidence="1">Carboxylation allows a single lysine to coordinate two divalent metal cations.</text>
</comment>
<comment type="similarity">
    <text evidence="1">Belongs to the metallo-dependent hydrolases superfamily. Hydantoinase/dihydropyrimidinase family.</text>
</comment>
<proteinExistence type="inferred from homology"/>
<feature type="chain" id="PRO_1000186912" description="D-phenylhydantoinase">
    <location>
        <begin position="1"/>
        <end position="461"/>
    </location>
</feature>
<feature type="binding site" evidence="1">
    <location>
        <position position="59"/>
    </location>
    <ligand>
        <name>a divalent metal cation</name>
        <dbReference type="ChEBI" id="CHEBI:60240"/>
        <label>1</label>
    </ligand>
</feature>
<feature type="binding site" evidence="1">
    <location>
        <position position="61"/>
    </location>
    <ligand>
        <name>a divalent metal cation</name>
        <dbReference type="ChEBI" id="CHEBI:60240"/>
        <label>1</label>
    </ligand>
</feature>
<feature type="binding site" description="via carbamate group" evidence="1">
    <location>
        <position position="151"/>
    </location>
    <ligand>
        <name>a divalent metal cation</name>
        <dbReference type="ChEBI" id="CHEBI:60240"/>
        <label>1</label>
    </ligand>
</feature>
<feature type="binding site" description="via carbamate group" evidence="1">
    <location>
        <position position="151"/>
    </location>
    <ligand>
        <name>a divalent metal cation</name>
        <dbReference type="ChEBI" id="CHEBI:60240"/>
        <label>2</label>
    </ligand>
</feature>
<feature type="binding site" evidence="1">
    <location>
        <position position="156"/>
    </location>
    <ligand>
        <name>substrate</name>
    </ligand>
</feature>
<feature type="binding site" evidence="1">
    <location>
        <position position="182"/>
    </location>
    <ligand>
        <name>a divalent metal cation</name>
        <dbReference type="ChEBI" id="CHEBI:60240"/>
        <label>2</label>
    </ligand>
</feature>
<feature type="binding site" evidence="1">
    <location>
        <position position="239"/>
    </location>
    <ligand>
        <name>a divalent metal cation</name>
        <dbReference type="ChEBI" id="CHEBI:60240"/>
        <label>2</label>
    </ligand>
</feature>
<feature type="binding site" evidence="1">
    <location>
        <position position="286"/>
    </location>
    <ligand>
        <name>substrate</name>
    </ligand>
</feature>
<feature type="binding site" evidence="1">
    <location>
        <position position="313"/>
    </location>
    <ligand>
        <name>a divalent metal cation</name>
        <dbReference type="ChEBI" id="CHEBI:60240"/>
        <label>1</label>
    </ligand>
</feature>
<feature type="binding site" evidence="1">
    <location>
        <position position="335"/>
    </location>
    <ligand>
        <name>substrate</name>
    </ligand>
</feature>
<feature type="modified residue" description="N6-carboxylysine" evidence="1">
    <location>
        <position position="151"/>
    </location>
</feature>
<protein>
    <recommendedName>
        <fullName evidence="1">D-phenylhydantoinase</fullName>
        <ecNumber evidence="1">3.5.2.-</ecNumber>
    </recommendedName>
    <alternativeName>
        <fullName evidence="1">Hydantoin-utilizing enzyme HyuA</fullName>
    </alternativeName>
</protein>
<sequence length="461" mass="51043">MRVLIKNGTVVNADGQAKQDLLIESGIVRQLGNNISPQLPYEEIDATGCYVFPGGVDVHTHFNIDVGIARSCDDFFTGTRAAACGGTTTIIDHMGFGPNGCRLRHQLEVYRGYAAHKAVIDYSFHGVIQHINHAILDEIPMMVEEGLSSFKLYLTYQYKLNDDEVLQALRRLHESGALTTVHPENDAAIASKRAEFIAAGLTAPRYHALSRPLECEAEAIARMINLAQIAGNAPLYIVHLSNGLGLDYLRLARANHQPVWVETCPQYLLLDERSYDTEDGMKFILSPPLRNVREQDKLWCGISDGAIDVVATDHCTFSMAQRLQISKGDFSRCPNGLPGVENRMQLLFSSGVMTGRITPERFVELTSAMPARLFGLWPQKGLLAPGSDGDVVIIDPRQSQQIQHRHLHDNADYSPWEGFTCQGAIVRTLSRGETIFCDGTFTGKAGRGRFLRRKPFVPPVL</sequence>
<gene>
    <name evidence="1" type="primary">hyuA</name>
    <name type="ordered locus">ECIAI1_2993</name>
</gene>
<organism>
    <name type="scientific">Escherichia coli O8 (strain IAI1)</name>
    <dbReference type="NCBI Taxonomy" id="585034"/>
    <lineage>
        <taxon>Bacteria</taxon>
        <taxon>Pseudomonadati</taxon>
        <taxon>Pseudomonadota</taxon>
        <taxon>Gammaproteobacteria</taxon>
        <taxon>Enterobacterales</taxon>
        <taxon>Enterobacteriaceae</taxon>
        <taxon>Escherichia</taxon>
    </lineage>
</organism>
<keyword id="KW-0378">Hydrolase</keyword>
<keyword id="KW-0479">Metal-binding</keyword>
<name>PHYDA_ECO8A</name>
<accession>B7LYD8</accession>
<dbReference type="EC" id="3.5.2.-" evidence="1"/>
<dbReference type="EMBL" id="CU928160">
    <property type="protein sequence ID" value="CAQ99808.1"/>
    <property type="molecule type" value="Genomic_DNA"/>
</dbReference>
<dbReference type="RefSeq" id="WP_001264452.1">
    <property type="nucleotide sequence ID" value="NC_011741.1"/>
</dbReference>
<dbReference type="SMR" id="B7LYD8"/>
<dbReference type="GeneID" id="93779129"/>
<dbReference type="KEGG" id="ecr:ECIAI1_2993"/>
<dbReference type="HOGENOM" id="CLU_015572_2_0_6"/>
<dbReference type="GO" id="GO:0005829">
    <property type="term" value="C:cytosol"/>
    <property type="evidence" value="ECO:0007669"/>
    <property type="project" value="TreeGrafter"/>
</dbReference>
<dbReference type="GO" id="GO:0016812">
    <property type="term" value="F:hydrolase activity, acting on carbon-nitrogen (but not peptide) bonds, in cyclic amides"/>
    <property type="evidence" value="ECO:0007669"/>
    <property type="project" value="UniProtKB-UniRule"/>
</dbReference>
<dbReference type="GO" id="GO:0046872">
    <property type="term" value="F:metal ion binding"/>
    <property type="evidence" value="ECO:0007669"/>
    <property type="project" value="UniProtKB-KW"/>
</dbReference>
<dbReference type="GO" id="GO:0006208">
    <property type="term" value="P:pyrimidine nucleobase catabolic process"/>
    <property type="evidence" value="ECO:0007669"/>
    <property type="project" value="InterPro"/>
</dbReference>
<dbReference type="CDD" id="cd01314">
    <property type="entry name" value="D-HYD"/>
    <property type="match status" value="1"/>
</dbReference>
<dbReference type="FunFam" id="3.20.20.140:FF:000026">
    <property type="entry name" value="D-phenylhydantoinase"/>
    <property type="match status" value="1"/>
</dbReference>
<dbReference type="Gene3D" id="3.20.20.140">
    <property type="entry name" value="Metal-dependent hydrolases"/>
    <property type="match status" value="1"/>
</dbReference>
<dbReference type="Gene3D" id="2.30.40.10">
    <property type="entry name" value="Urease, subunit C, domain 1"/>
    <property type="match status" value="1"/>
</dbReference>
<dbReference type="HAMAP" id="MF_01644">
    <property type="entry name" value="D_hydantoinase"/>
    <property type="match status" value="1"/>
</dbReference>
<dbReference type="InterPro" id="IPR006680">
    <property type="entry name" value="Amidohydro-rel"/>
</dbReference>
<dbReference type="InterPro" id="IPR023766">
    <property type="entry name" value="D_phenylhydantoinase"/>
</dbReference>
<dbReference type="InterPro" id="IPR011778">
    <property type="entry name" value="Hydantoinase/dihydroPyrase"/>
</dbReference>
<dbReference type="InterPro" id="IPR011059">
    <property type="entry name" value="Metal-dep_hydrolase_composite"/>
</dbReference>
<dbReference type="InterPro" id="IPR032466">
    <property type="entry name" value="Metal_Hydrolase"/>
</dbReference>
<dbReference type="InterPro" id="IPR050378">
    <property type="entry name" value="Metallo-dep_Hydrolases_sf"/>
</dbReference>
<dbReference type="NCBIfam" id="TIGR02033">
    <property type="entry name" value="D-hydantoinase"/>
    <property type="match status" value="1"/>
</dbReference>
<dbReference type="PANTHER" id="PTHR11647:SF1">
    <property type="entry name" value="COLLAPSIN RESPONSE MEDIATOR PROTEIN"/>
    <property type="match status" value="1"/>
</dbReference>
<dbReference type="PANTHER" id="PTHR11647">
    <property type="entry name" value="HYDRANTOINASE/DIHYDROPYRIMIDINASE FAMILY MEMBER"/>
    <property type="match status" value="1"/>
</dbReference>
<dbReference type="Pfam" id="PF01979">
    <property type="entry name" value="Amidohydro_1"/>
    <property type="match status" value="1"/>
</dbReference>
<dbReference type="SUPFAM" id="SSF51338">
    <property type="entry name" value="Composite domain of metallo-dependent hydrolases"/>
    <property type="match status" value="2"/>
</dbReference>
<dbReference type="SUPFAM" id="SSF51556">
    <property type="entry name" value="Metallo-dependent hydrolases"/>
    <property type="match status" value="1"/>
</dbReference>
<reference key="1">
    <citation type="journal article" date="2009" name="PLoS Genet.">
        <title>Organised genome dynamics in the Escherichia coli species results in highly diverse adaptive paths.</title>
        <authorList>
            <person name="Touchon M."/>
            <person name="Hoede C."/>
            <person name="Tenaillon O."/>
            <person name="Barbe V."/>
            <person name="Baeriswyl S."/>
            <person name="Bidet P."/>
            <person name="Bingen E."/>
            <person name="Bonacorsi S."/>
            <person name="Bouchier C."/>
            <person name="Bouvet O."/>
            <person name="Calteau A."/>
            <person name="Chiapello H."/>
            <person name="Clermont O."/>
            <person name="Cruveiller S."/>
            <person name="Danchin A."/>
            <person name="Diard M."/>
            <person name="Dossat C."/>
            <person name="Karoui M.E."/>
            <person name="Frapy E."/>
            <person name="Garry L."/>
            <person name="Ghigo J.M."/>
            <person name="Gilles A.M."/>
            <person name="Johnson J."/>
            <person name="Le Bouguenec C."/>
            <person name="Lescat M."/>
            <person name="Mangenot S."/>
            <person name="Martinez-Jehanne V."/>
            <person name="Matic I."/>
            <person name="Nassif X."/>
            <person name="Oztas S."/>
            <person name="Petit M.A."/>
            <person name="Pichon C."/>
            <person name="Rouy Z."/>
            <person name="Ruf C.S."/>
            <person name="Schneider D."/>
            <person name="Tourret J."/>
            <person name="Vacherie B."/>
            <person name="Vallenet D."/>
            <person name="Medigue C."/>
            <person name="Rocha E.P.C."/>
            <person name="Denamur E."/>
        </authorList>
    </citation>
    <scope>NUCLEOTIDE SEQUENCE [LARGE SCALE GENOMIC DNA]</scope>
    <source>
        <strain>IAI1</strain>
    </source>
</reference>
<evidence type="ECO:0000255" key="1">
    <source>
        <dbReference type="HAMAP-Rule" id="MF_01644"/>
    </source>
</evidence>